<sequence>MKFVDEATIKVKAGDGGNGCVSFRREKFVPFGGPDGGDGGDGGSVYLVATHDLNTLADFRFQRHYEAQRGENGSGRNMTGASGADLEVPVPVGTLAYDAETEELIGDLVEHGQRLLVAQGGFHGLGNTRYKTSTNRAPRQSKPGTPGELRVLRLELKLLADVGLLGLPNAGKSTLITQVSGARPKIADYPFTTLYPGLGVVRVGPLQSFVMADIPGLIEGAAEGAGLGIQFLKHLSRTRLLLHLVDVAPADPAEDPVAAVHTIEAELQQFSEDLASRPRWLVLNKIDLIAPDERESFTKELVARLGWEGPVYAISAATGEACESLMQAIMKYLEEAQSHDADTATAG</sequence>
<evidence type="ECO:0000255" key="1">
    <source>
        <dbReference type="HAMAP-Rule" id="MF_01454"/>
    </source>
</evidence>
<evidence type="ECO:0000255" key="2">
    <source>
        <dbReference type="PROSITE-ProRule" id="PRU01231"/>
    </source>
</evidence>
<evidence type="ECO:0000256" key="3">
    <source>
        <dbReference type="SAM" id="MobiDB-lite"/>
    </source>
</evidence>
<comment type="function">
    <text evidence="1">An essential GTPase which binds GTP, GDP and possibly (p)ppGpp with moderate affinity, with high nucleotide exchange rates and a fairly low GTP hydrolysis rate. Plays a role in control of the cell cycle, stress response, ribosome biogenesis and in those bacteria that undergo differentiation, in morphogenesis control.</text>
</comment>
<comment type="cofactor">
    <cofactor evidence="1">
        <name>Mg(2+)</name>
        <dbReference type="ChEBI" id="CHEBI:18420"/>
    </cofactor>
</comment>
<comment type="subunit">
    <text evidence="1">Monomer.</text>
</comment>
<comment type="subcellular location">
    <subcellularLocation>
        <location evidence="1">Cytoplasm</location>
    </subcellularLocation>
</comment>
<comment type="similarity">
    <text evidence="1">Belongs to the TRAFAC class OBG-HflX-like GTPase superfamily. OBG GTPase family.</text>
</comment>
<organism>
    <name type="scientific">Thioalkalivibrio sulfidiphilus (strain HL-EbGR7)</name>
    <dbReference type="NCBI Taxonomy" id="396588"/>
    <lineage>
        <taxon>Bacteria</taxon>
        <taxon>Pseudomonadati</taxon>
        <taxon>Pseudomonadota</taxon>
        <taxon>Gammaproteobacteria</taxon>
        <taxon>Chromatiales</taxon>
        <taxon>Ectothiorhodospiraceae</taxon>
        <taxon>Thioalkalivibrio</taxon>
    </lineage>
</organism>
<accession>B8GQQ3</accession>
<gene>
    <name evidence="1" type="primary">obg</name>
    <name type="ordered locus">Tgr7_3208</name>
</gene>
<proteinExistence type="inferred from homology"/>
<reference key="1">
    <citation type="journal article" date="2011" name="Stand. Genomic Sci.">
        <title>Complete genome sequence of 'Thioalkalivibrio sulfidophilus' HL-EbGr7.</title>
        <authorList>
            <person name="Muyzer G."/>
            <person name="Sorokin D.Y."/>
            <person name="Mavromatis K."/>
            <person name="Lapidus A."/>
            <person name="Clum A."/>
            <person name="Ivanova N."/>
            <person name="Pati A."/>
            <person name="d'Haeseleer P."/>
            <person name="Woyke T."/>
            <person name="Kyrpides N.C."/>
        </authorList>
    </citation>
    <scope>NUCLEOTIDE SEQUENCE [LARGE SCALE GENOMIC DNA]</scope>
    <source>
        <strain>HL-EbGR7</strain>
    </source>
</reference>
<keyword id="KW-0963">Cytoplasm</keyword>
<keyword id="KW-0342">GTP-binding</keyword>
<keyword id="KW-0378">Hydrolase</keyword>
<keyword id="KW-0460">Magnesium</keyword>
<keyword id="KW-0479">Metal-binding</keyword>
<keyword id="KW-0547">Nucleotide-binding</keyword>
<keyword id="KW-1185">Reference proteome</keyword>
<feature type="chain" id="PRO_0000386362" description="GTPase Obg">
    <location>
        <begin position="1"/>
        <end position="347"/>
    </location>
</feature>
<feature type="domain" description="Obg" evidence="2">
    <location>
        <begin position="1"/>
        <end position="159"/>
    </location>
</feature>
<feature type="domain" description="OBG-type G" evidence="1">
    <location>
        <begin position="160"/>
        <end position="334"/>
    </location>
</feature>
<feature type="region of interest" description="Disordered" evidence="3">
    <location>
        <begin position="127"/>
        <end position="146"/>
    </location>
</feature>
<feature type="compositionally biased region" description="Polar residues" evidence="3">
    <location>
        <begin position="129"/>
        <end position="138"/>
    </location>
</feature>
<feature type="binding site" evidence="1">
    <location>
        <begin position="166"/>
        <end position="173"/>
    </location>
    <ligand>
        <name>GTP</name>
        <dbReference type="ChEBI" id="CHEBI:37565"/>
    </ligand>
</feature>
<feature type="binding site" evidence="1">
    <location>
        <position position="173"/>
    </location>
    <ligand>
        <name>Mg(2+)</name>
        <dbReference type="ChEBI" id="CHEBI:18420"/>
    </ligand>
</feature>
<feature type="binding site" evidence="1">
    <location>
        <begin position="191"/>
        <end position="195"/>
    </location>
    <ligand>
        <name>GTP</name>
        <dbReference type="ChEBI" id="CHEBI:37565"/>
    </ligand>
</feature>
<feature type="binding site" evidence="1">
    <location>
        <position position="193"/>
    </location>
    <ligand>
        <name>Mg(2+)</name>
        <dbReference type="ChEBI" id="CHEBI:18420"/>
    </ligand>
</feature>
<feature type="binding site" evidence="1">
    <location>
        <begin position="213"/>
        <end position="216"/>
    </location>
    <ligand>
        <name>GTP</name>
        <dbReference type="ChEBI" id="CHEBI:37565"/>
    </ligand>
</feature>
<feature type="binding site" evidence="1">
    <location>
        <begin position="284"/>
        <end position="287"/>
    </location>
    <ligand>
        <name>GTP</name>
        <dbReference type="ChEBI" id="CHEBI:37565"/>
    </ligand>
</feature>
<feature type="binding site" evidence="1">
    <location>
        <begin position="315"/>
        <end position="317"/>
    </location>
    <ligand>
        <name>GTP</name>
        <dbReference type="ChEBI" id="CHEBI:37565"/>
    </ligand>
</feature>
<dbReference type="EC" id="3.6.5.-" evidence="1"/>
<dbReference type="EMBL" id="CP001339">
    <property type="protein sequence ID" value="ACL74277.1"/>
    <property type="molecule type" value="Genomic_DNA"/>
</dbReference>
<dbReference type="RefSeq" id="WP_012639739.1">
    <property type="nucleotide sequence ID" value="NC_011901.1"/>
</dbReference>
<dbReference type="SMR" id="B8GQQ3"/>
<dbReference type="STRING" id="396588.Tgr7_3208"/>
<dbReference type="KEGG" id="tgr:Tgr7_3208"/>
<dbReference type="eggNOG" id="COG0536">
    <property type="taxonomic scope" value="Bacteria"/>
</dbReference>
<dbReference type="HOGENOM" id="CLU_011747_2_0_6"/>
<dbReference type="OrthoDB" id="9807318at2"/>
<dbReference type="Proteomes" id="UP000002383">
    <property type="component" value="Chromosome"/>
</dbReference>
<dbReference type="GO" id="GO:0005737">
    <property type="term" value="C:cytoplasm"/>
    <property type="evidence" value="ECO:0007669"/>
    <property type="project" value="UniProtKB-SubCell"/>
</dbReference>
<dbReference type="GO" id="GO:0005525">
    <property type="term" value="F:GTP binding"/>
    <property type="evidence" value="ECO:0007669"/>
    <property type="project" value="UniProtKB-UniRule"/>
</dbReference>
<dbReference type="GO" id="GO:0003924">
    <property type="term" value="F:GTPase activity"/>
    <property type="evidence" value="ECO:0007669"/>
    <property type="project" value="UniProtKB-UniRule"/>
</dbReference>
<dbReference type="GO" id="GO:0000287">
    <property type="term" value="F:magnesium ion binding"/>
    <property type="evidence" value="ECO:0007669"/>
    <property type="project" value="InterPro"/>
</dbReference>
<dbReference type="GO" id="GO:0042254">
    <property type="term" value="P:ribosome biogenesis"/>
    <property type="evidence" value="ECO:0007669"/>
    <property type="project" value="UniProtKB-UniRule"/>
</dbReference>
<dbReference type="CDD" id="cd01898">
    <property type="entry name" value="Obg"/>
    <property type="match status" value="1"/>
</dbReference>
<dbReference type="FunFam" id="2.70.210.12:FF:000001">
    <property type="entry name" value="GTPase Obg"/>
    <property type="match status" value="1"/>
</dbReference>
<dbReference type="Gene3D" id="2.70.210.12">
    <property type="entry name" value="GTP1/OBG domain"/>
    <property type="match status" value="1"/>
</dbReference>
<dbReference type="Gene3D" id="3.40.50.300">
    <property type="entry name" value="P-loop containing nucleotide triphosphate hydrolases"/>
    <property type="match status" value="1"/>
</dbReference>
<dbReference type="HAMAP" id="MF_01454">
    <property type="entry name" value="GTPase_Obg"/>
    <property type="match status" value="1"/>
</dbReference>
<dbReference type="InterPro" id="IPR031167">
    <property type="entry name" value="G_OBG"/>
</dbReference>
<dbReference type="InterPro" id="IPR006073">
    <property type="entry name" value="GTP-bd"/>
</dbReference>
<dbReference type="InterPro" id="IPR014100">
    <property type="entry name" value="GTP-bd_Obg/CgtA"/>
</dbReference>
<dbReference type="InterPro" id="IPR006074">
    <property type="entry name" value="GTP1-OBG_CS"/>
</dbReference>
<dbReference type="InterPro" id="IPR006169">
    <property type="entry name" value="GTP1_OBG_dom"/>
</dbReference>
<dbReference type="InterPro" id="IPR036726">
    <property type="entry name" value="GTP1_OBG_dom_sf"/>
</dbReference>
<dbReference type="InterPro" id="IPR045086">
    <property type="entry name" value="OBG_GTPase"/>
</dbReference>
<dbReference type="InterPro" id="IPR027417">
    <property type="entry name" value="P-loop_NTPase"/>
</dbReference>
<dbReference type="NCBIfam" id="TIGR02729">
    <property type="entry name" value="Obg_CgtA"/>
    <property type="match status" value="1"/>
</dbReference>
<dbReference type="NCBIfam" id="NF008955">
    <property type="entry name" value="PRK12297.1"/>
    <property type="match status" value="1"/>
</dbReference>
<dbReference type="NCBIfam" id="NF008956">
    <property type="entry name" value="PRK12299.1"/>
    <property type="match status" value="1"/>
</dbReference>
<dbReference type="PANTHER" id="PTHR11702">
    <property type="entry name" value="DEVELOPMENTALLY REGULATED GTP-BINDING PROTEIN-RELATED"/>
    <property type="match status" value="1"/>
</dbReference>
<dbReference type="PANTHER" id="PTHR11702:SF31">
    <property type="entry name" value="MITOCHONDRIAL RIBOSOME-ASSOCIATED GTPASE 2"/>
    <property type="match status" value="1"/>
</dbReference>
<dbReference type="Pfam" id="PF01018">
    <property type="entry name" value="GTP1_OBG"/>
    <property type="match status" value="1"/>
</dbReference>
<dbReference type="Pfam" id="PF01926">
    <property type="entry name" value="MMR_HSR1"/>
    <property type="match status" value="1"/>
</dbReference>
<dbReference type="PIRSF" id="PIRSF002401">
    <property type="entry name" value="GTP_bd_Obg/CgtA"/>
    <property type="match status" value="1"/>
</dbReference>
<dbReference type="PRINTS" id="PR00326">
    <property type="entry name" value="GTP1OBG"/>
</dbReference>
<dbReference type="SUPFAM" id="SSF82051">
    <property type="entry name" value="Obg GTP-binding protein N-terminal domain"/>
    <property type="match status" value="1"/>
</dbReference>
<dbReference type="SUPFAM" id="SSF52540">
    <property type="entry name" value="P-loop containing nucleoside triphosphate hydrolases"/>
    <property type="match status" value="1"/>
</dbReference>
<dbReference type="PROSITE" id="PS51710">
    <property type="entry name" value="G_OBG"/>
    <property type="match status" value="1"/>
</dbReference>
<dbReference type="PROSITE" id="PS00905">
    <property type="entry name" value="GTP1_OBG"/>
    <property type="match status" value="1"/>
</dbReference>
<dbReference type="PROSITE" id="PS51883">
    <property type="entry name" value="OBG"/>
    <property type="match status" value="1"/>
</dbReference>
<name>OBG_THISH</name>
<protein>
    <recommendedName>
        <fullName evidence="1">GTPase Obg</fullName>
        <ecNumber evidence="1">3.6.5.-</ecNumber>
    </recommendedName>
    <alternativeName>
        <fullName evidence="1">GTP-binding protein Obg</fullName>
    </alternativeName>
</protein>